<reference key="1">
    <citation type="journal article" date="1996" name="J. Bacteriol.">
        <title>Thermostable chemotaxis proteins from the hyperthermophilic bacterium Thermotoga maritima.</title>
        <authorList>
            <person name="Swanson R.V."/>
            <person name="Sanna M.G."/>
            <person name="Simon M.I."/>
        </authorList>
    </citation>
    <scope>NUCLEOTIDE SEQUENCE [GENOMIC DNA]</scope>
</reference>
<reference key="2">
    <citation type="journal article" date="1999" name="Nature">
        <title>Evidence for lateral gene transfer between Archaea and Bacteria from genome sequence of Thermotoga maritima.</title>
        <authorList>
            <person name="Nelson K.E."/>
            <person name="Clayton R.A."/>
            <person name="Gill S.R."/>
            <person name="Gwinn M.L."/>
            <person name="Dodson R.J."/>
            <person name="Haft D.H."/>
            <person name="Hickey E.K."/>
            <person name="Peterson J.D."/>
            <person name="Nelson W.C."/>
            <person name="Ketchum K.A."/>
            <person name="McDonald L.A."/>
            <person name="Utterback T.R."/>
            <person name="Malek J.A."/>
            <person name="Linher K.D."/>
            <person name="Garrett M.M."/>
            <person name="Stewart A.M."/>
            <person name="Cotton M.D."/>
            <person name="Pratt M.S."/>
            <person name="Phillips C.A."/>
            <person name="Richardson D.L."/>
            <person name="Heidelberg J.F."/>
            <person name="Sutton G.G."/>
            <person name="Fleischmann R.D."/>
            <person name="Eisen J.A."/>
            <person name="White O."/>
            <person name="Salzberg S.L."/>
            <person name="Smith H.O."/>
            <person name="Venter J.C."/>
            <person name="Fraser C.M."/>
        </authorList>
    </citation>
    <scope>NUCLEOTIDE SEQUENCE [LARGE SCALE GENOMIC DNA]</scope>
    <source>
        <strain>ATCC 43589 / DSM 3109 / JCM 10099 / NBRC 100826 / MSB8</strain>
    </source>
</reference>
<reference key="3">
    <citation type="journal article" date="1998" name="Arch. Biochem. Biophys.">
        <title>A highly active protein repair enzyme from an extreme thermophile: the L-isoaspartyl methyltransferase from Thermotoga maritima.</title>
        <authorList>
            <person name="Ichikawa J.K."/>
            <person name="Clarke S."/>
        </authorList>
    </citation>
    <scope>CHARACTERIZATION</scope>
</reference>
<reference key="4">
    <citation type="journal article" date="2000" name="Structure">
        <title>Crystal structure of protein isoaspartyl methyltransferase. A catalyst for protein repair.</title>
        <authorList>
            <person name="Skinner M.M."/>
            <person name="Puvathingal J.M."/>
            <person name="Walter R.L."/>
            <person name="Friedman A.M."/>
        </authorList>
    </citation>
    <scope>X-RAY CRYSTALLOGRAPHY (1.8 ANGSTROMS)</scope>
</reference>
<dbReference type="EC" id="2.1.1.77"/>
<dbReference type="EMBL" id="U30501">
    <property type="protein sequence ID" value="AAA96385.1"/>
    <property type="molecule type" value="Genomic_DNA"/>
</dbReference>
<dbReference type="EMBL" id="AE000512">
    <property type="protein sequence ID" value="AAD35786.1"/>
    <property type="molecule type" value="Genomic_DNA"/>
</dbReference>
<dbReference type="PIR" id="G72342">
    <property type="entry name" value="G72342"/>
</dbReference>
<dbReference type="RefSeq" id="NP_228513.1">
    <property type="nucleotide sequence ID" value="NC_000853.1"/>
</dbReference>
<dbReference type="RefSeq" id="WP_004081036.1">
    <property type="nucleotide sequence ID" value="NZ_CP011107.1"/>
</dbReference>
<dbReference type="PDB" id="1DL5">
    <property type="method" value="X-ray"/>
    <property type="resolution" value="1.80 A"/>
    <property type="chains" value="A/B=1-317"/>
</dbReference>
<dbReference type="PDBsum" id="1DL5"/>
<dbReference type="SMR" id="Q56308"/>
<dbReference type="STRING" id="243274.TM_0704"/>
<dbReference type="DrugBank" id="DB01752">
    <property type="generic name" value="S-adenosyl-L-homocysteine"/>
</dbReference>
<dbReference type="PaxDb" id="243274-THEMA_01145"/>
<dbReference type="EnsemblBacteria" id="AAD35786">
    <property type="protein sequence ID" value="AAD35786"/>
    <property type="gene ID" value="TM_0704"/>
</dbReference>
<dbReference type="KEGG" id="tma:TM0704"/>
<dbReference type="KEGG" id="tmi:THEMA_01145"/>
<dbReference type="KEGG" id="tmm:Tmari_0704"/>
<dbReference type="KEGG" id="tmw:THMA_0719"/>
<dbReference type="eggNOG" id="COG2518">
    <property type="taxonomic scope" value="Bacteria"/>
</dbReference>
<dbReference type="InParanoid" id="Q56308"/>
<dbReference type="OrthoDB" id="9772751at2"/>
<dbReference type="EvolutionaryTrace" id="Q56308"/>
<dbReference type="Proteomes" id="UP000008183">
    <property type="component" value="Chromosome"/>
</dbReference>
<dbReference type="GO" id="GO:0005737">
    <property type="term" value="C:cytoplasm"/>
    <property type="evidence" value="ECO:0000318"/>
    <property type="project" value="GO_Central"/>
</dbReference>
<dbReference type="GO" id="GO:0004719">
    <property type="term" value="F:protein-L-isoaspartate (D-aspartate) O-methyltransferase activity"/>
    <property type="evidence" value="ECO:0000318"/>
    <property type="project" value="GO_Central"/>
</dbReference>
<dbReference type="GO" id="GO:0032259">
    <property type="term" value="P:methylation"/>
    <property type="evidence" value="ECO:0007669"/>
    <property type="project" value="UniProtKB-KW"/>
</dbReference>
<dbReference type="GO" id="GO:0036211">
    <property type="term" value="P:protein modification process"/>
    <property type="evidence" value="ECO:0007669"/>
    <property type="project" value="UniProtKB-UniRule"/>
</dbReference>
<dbReference type="GO" id="GO:0030091">
    <property type="term" value="P:protein repair"/>
    <property type="evidence" value="ECO:0007669"/>
    <property type="project" value="UniProtKB-UniRule"/>
</dbReference>
<dbReference type="CDD" id="cd02440">
    <property type="entry name" value="AdoMet_MTases"/>
    <property type="match status" value="1"/>
</dbReference>
<dbReference type="Gene3D" id="3.55.20.10">
    <property type="entry name" value="Protein-L-isoaspartyl O-methyltransferase, C-terminal domain"/>
    <property type="match status" value="1"/>
</dbReference>
<dbReference type="Gene3D" id="3.40.50.150">
    <property type="entry name" value="Vaccinia Virus protein VP39"/>
    <property type="match status" value="1"/>
</dbReference>
<dbReference type="HAMAP" id="MF_00090">
    <property type="entry name" value="PIMT"/>
    <property type="match status" value="1"/>
</dbReference>
<dbReference type="InterPro" id="IPR000682">
    <property type="entry name" value="PCMT"/>
</dbReference>
<dbReference type="InterPro" id="IPR009107">
    <property type="entry name" value="PIM_MeTrfase_C"/>
</dbReference>
<dbReference type="InterPro" id="IPR049284">
    <property type="entry name" value="PIMT_C"/>
</dbReference>
<dbReference type="InterPro" id="IPR029063">
    <property type="entry name" value="SAM-dependent_MTases_sf"/>
</dbReference>
<dbReference type="NCBIfam" id="NF010550">
    <property type="entry name" value="PRK13943.1"/>
    <property type="match status" value="1"/>
</dbReference>
<dbReference type="PANTHER" id="PTHR11579">
    <property type="entry name" value="PROTEIN-L-ISOASPARTATE O-METHYLTRANSFERASE"/>
    <property type="match status" value="1"/>
</dbReference>
<dbReference type="PANTHER" id="PTHR11579:SF0">
    <property type="entry name" value="PROTEIN-L-ISOASPARTATE(D-ASPARTATE) O-METHYLTRANSFERASE"/>
    <property type="match status" value="1"/>
</dbReference>
<dbReference type="Pfam" id="PF01135">
    <property type="entry name" value="PCMT"/>
    <property type="match status" value="1"/>
</dbReference>
<dbReference type="Pfam" id="PF20799">
    <property type="entry name" value="PIMT_C"/>
    <property type="match status" value="1"/>
</dbReference>
<dbReference type="SUPFAM" id="SSF68930">
    <property type="entry name" value="Protein-L-isoaspartyl O-methyltransferase, C-terminal domain"/>
    <property type="match status" value="1"/>
</dbReference>
<dbReference type="SUPFAM" id="SSF53335">
    <property type="entry name" value="S-adenosyl-L-methionine-dependent methyltransferases"/>
    <property type="match status" value="1"/>
</dbReference>
<dbReference type="PROSITE" id="PS01279">
    <property type="entry name" value="PCMT"/>
    <property type="match status" value="1"/>
</dbReference>
<gene>
    <name type="primary">pcm</name>
    <name type="ordered locus">TM_0704</name>
</gene>
<evidence type="ECO:0000250" key="1"/>
<evidence type="ECO:0000305" key="2"/>
<evidence type="ECO:0007829" key="3">
    <source>
        <dbReference type="PDB" id="1DL5"/>
    </source>
</evidence>
<organism>
    <name type="scientific">Thermotoga maritima (strain ATCC 43589 / DSM 3109 / JCM 10099 / NBRC 100826 / MSB8)</name>
    <dbReference type="NCBI Taxonomy" id="243274"/>
    <lineage>
        <taxon>Bacteria</taxon>
        <taxon>Thermotogati</taxon>
        <taxon>Thermotogota</taxon>
        <taxon>Thermotogae</taxon>
        <taxon>Thermotogales</taxon>
        <taxon>Thermotogaceae</taxon>
        <taxon>Thermotoga</taxon>
    </lineage>
</organism>
<proteinExistence type="evidence at protein level"/>
<feature type="chain" id="PRO_0000111905" description="Protein-L-isoaspartate O-methyltransferase">
    <location>
        <begin position="1"/>
        <end position="317"/>
    </location>
</feature>
<feature type="active site" evidence="1">
    <location>
        <position position="59"/>
    </location>
</feature>
<feature type="helix" evidence="3">
    <location>
        <begin position="2"/>
        <end position="11"/>
    </location>
</feature>
<feature type="helix" evidence="3">
    <location>
        <begin position="16"/>
        <end position="24"/>
    </location>
</feature>
<feature type="helix" evidence="3">
    <location>
        <begin position="27"/>
        <end position="30"/>
    </location>
</feature>
<feature type="helix" evidence="3">
    <location>
        <begin position="37"/>
        <end position="40"/>
    </location>
</feature>
<feature type="strand" evidence="3">
    <location>
        <begin position="42"/>
        <end position="44"/>
    </location>
</feature>
<feature type="strand" evidence="3">
    <location>
        <begin position="46"/>
        <end position="50"/>
    </location>
</feature>
<feature type="strand" evidence="3">
    <location>
        <begin position="55"/>
        <end position="58"/>
    </location>
</feature>
<feature type="helix" evidence="3">
    <location>
        <begin position="61"/>
        <end position="70"/>
    </location>
</feature>
<feature type="strand" evidence="3">
    <location>
        <begin position="78"/>
        <end position="82"/>
    </location>
</feature>
<feature type="helix" evidence="3">
    <location>
        <begin position="88"/>
        <end position="97"/>
    </location>
</feature>
<feature type="strand" evidence="3">
    <location>
        <begin position="102"/>
        <end position="108"/>
    </location>
</feature>
<feature type="helix" evidence="3">
    <location>
        <begin position="110"/>
        <end position="122"/>
    </location>
</feature>
<feature type="strand" evidence="3">
    <location>
        <begin position="127"/>
        <end position="133"/>
    </location>
</feature>
<feature type="helix" evidence="3">
    <location>
        <begin position="135"/>
        <end position="137"/>
    </location>
</feature>
<feature type="helix" evidence="3">
    <location>
        <begin position="140"/>
        <end position="142"/>
    </location>
</feature>
<feature type="strand" evidence="3">
    <location>
        <begin position="145"/>
        <end position="150"/>
    </location>
</feature>
<feature type="strand" evidence="3">
    <location>
        <begin position="152"/>
        <end position="155"/>
    </location>
</feature>
<feature type="helix" evidence="3">
    <location>
        <begin position="159"/>
        <end position="164"/>
    </location>
</feature>
<feature type="strand" evidence="3">
    <location>
        <begin position="165"/>
        <end position="175"/>
    </location>
</feature>
<feature type="helix" evidence="3">
    <location>
        <begin position="178"/>
        <end position="180"/>
    </location>
</feature>
<feature type="strand" evidence="3">
    <location>
        <begin position="184"/>
        <end position="191"/>
    </location>
</feature>
<feature type="strand" evidence="3">
    <location>
        <begin position="194"/>
        <end position="202"/>
    </location>
</feature>
<feature type="helix" evidence="3">
    <location>
        <begin position="210"/>
        <end position="212"/>
    </location>
</feature>
<feature type="helix" evidence="3">
    <location>
        <begin position="215"/>
        <end position="220"/>
    </location>
</feature>
<feature type="strand" evidence="3">
    <location>
        <begin position="228"/>
        <end position="233"/>
    </location>
</feature>
<feature type="helix" evidence="3">
    <location>
        <begin position="237"/>
        <end position="248"/>
    </location>
</feature>
<feature type="strand" evidence="3">
    <location>
        <begin position="251"/>
        <end position="254"/>
    </location>
</feature>
<feature type="strand" evidence="3">
    <location>
        <begin position="257"/>
        <end position="261"/>
    </location>
</feature>
<feature type="strand" evidence="3">
    <location>
        <begin position="263"/>
        <end position="270"/>
    </location>
</feature>
<feature type="strand" evidence="3">
    <location>
        <begin position="273"/>
        <end position="278"/>
    </location>
</feature>
<feature type="helix" evidence="3">
    <location>
        <begin position="281"/>
        <end position="292"/>
    </location>
</feature>
<feature type="turn" evidence="3">
    <location>
        <begin position="293"/>
        <end position="295"/>
    </location>
</feature>
<feature type="helix" evidence="3">
    <location>
        <begin position="298"/>
        <end position="300"/>
    </location>
</feature>
<feature type="strand" evidence="3">
    <location>
        <begin position="301"/>
        <end position="309"/>
    </location>
</feature>
<feature type="strand" evidence="3">
    <location>
        <begin position="312"/>
        <end position="314"/>
    </location>
</feature>
<name>PIMT_THEMA</name>
<comment type="function">
    <text>Catalyzes the methyl esterification of L-isoaspartyl residues in peptides and proteins that result from spontaneous decomposition of normal L-aspartyl and L-asparaginyl residues. It plays a role in the repair and/or degradation of damaged proteins.</text>
</comment>
<comment type="catalytic activity">
    <reaction>
        <text>[protein]-L-isoaspartate + S-adenosyl-L-methionine = [protein]-L-isoaspartate alpha-methyl ester + S-adenosyl-L-homocysteine</text>
        <dbReference type="Rhea" id="RHEA:12705"/>
        <dbReference type="Rhea" id="RHEA-COMP:12143"/>
        <dbReference type="Rhea" id="RHEA-COMP:12144"/>
        <dbReference type="ChEBI" id="CHEBI:57856"/>
        <dbReference type="ChEBI" id="CHEBI:59789"/>
        <dbReference type="ChEBI" id="CHEBI:90596"/>
        <dbReference type="ChEBI" id="CHEBI:90598"/>
        <dbReference type="EC" id="2.1.1.77"/>
    </reaction>
</comment>
<comment type="biophysicochemical properties">
    <kinetics>
        <Vmax>164.0 nmol/min/mg enzyme with KASA (isoD) LAKY as substrate at 85 degrees Celsius</Vmax>
    </kinetics>
    <temperatureDependence>
        <text>Optimum temperature is 85 degrees Celsius. Highly thermostable, with no loss of activity after 60 minutes at 100 degrees Celsius. Enzyme activity is observed at temperatures as high as 93 degrees Celsius.</text>
    </temperatureDependence>
</comment>
<comment type="subunit">
    <text>Monomer.</text>
</comment>
<comment type="subcellular location">
    <subcellularLocation>
        <location evidence="1">Cytoplasm</location>
    </subcellularLocation>
</comment>
<comment type="similarity">
    <text evidence="2">Belongs to the methyltransferase superfamily. L-isoaspartyl/D-aspartyl protein methyltransferase family.</text>
</comment>
<protein>
    <recommendedName>
        <fullName>Protein-L-isoaspartate O-methyltransferase</fullName>
        <ecNumber>2.1.1.77</ecNumber>
    </recommendedName>
    <alternativeName>
        <fullName>L-isoaspartyl protein carboxyl methyltransferase</fullName>
    </alternativeName>
    <alternativeName>
        <fullName>Protein L-isoaspartyl methyltransferase</fullName>
    </alternativeName>
    <alternativeName>
        <fullName>Protein-beta-aspartate methyltransferase</fullName>
        <shortName>PIMT</shortName>
    </alternativeName>
</protein>
<keyword id="KW-0002">3D-structure</keyword>
<keyword id="KW-0963">Cytoplasm</keyword>
<keyword id="KW-0489">Methyltransferase</keyword>
<keyword id="KW-1185">Reference proteome</keyword>
<keyword id="KW-0949">S-adenosyl-L-methionine</keyword>
<keyword id="KW-0808">Transferase</keyword>
<accession>Q56308</accession>
<sequence>MREKLFWILKKYGVSDHIAKAFLEIPREEFLTKSYPLSYVYEDIVLVSYDDGEEYSTSSQPSLMALFMEWVGLDKGMRVLEIGGGTGYNAAVMSRVVGEKGLVVSVEYSRKICEIAKRNVERLGIENVIFVCGDGYYGVPEFSPYDVIFVTVGVDEVPETWFTQLKEGGRVIVPINLKLSRRQPAFLFKKKDPYLVGNYKLETRFITAGGNLGNLLERNRKLLREFPFNREILLVRSHIFVELVDLLTRRLTEIDGTFYYAGPNGVVEFLDDRMRIYGDAPEIENLLTQWESCGYRSFEYLMLHVGYNAFSHISCSI</sequence>